<proteinExistence type="inferred from homology"/>
<dbReference type="EC" id="3.1.11.6" evidence="1"/>
<dbReference type="EMBL" id="CP000382">
    <property type="protein sequence ID" value="ABK61154.1"/>
    <property type="molecule type" value="Genomic_DNA"/>
</dbReference>
<dbReference type="RefSeq" id="WP_011722057.1">
    <property type="nucleotide sequence ID" value="NC_008593.1"/>
</dbReference>
<dbReference type="SMR" id="A0Q0A2"/>
<dbReference type="STRING" id="386415.NT01CX_1981"/>
<dbReference type="KEGG" id="cno:NT01CX_1981"/>
<dbReference type="eggNOG" id="COG1722">
    <property type="taxonomic scope" value="Bacteria"/>
</dbReference>
<dbReference type="HOGENOM" id="CLU_145918_3_2_9"/>
<dbReference type="Proteomes" id="UP000008220">
    <property type="component" value="Chromosome"/>
</dbReference>
<dbReference type="GO" id="GO:0005829">
    <property type="term" value="C:cytosol"/>
    <property type="evidence" value="ECO:0007669"/>
    <property type="project" value="TreeGrafter"/>
</dbReference>
<dbReference type="GO" id="GO:0009318">
    <property type="term" value="C:exodeoxyribonuclease VII complex"/>
    <property type="evidence" value="ECO:0007669"/>
    <property type="project" value="InterPro"/>
</dbReference>
<dbReference type="GO" id="GO:0008855">
    <property type="term" value="F:exodeoxyribonuclease VII activity"/>
    <property type="evidence" value="ECO:0007669"/>
    <property type="project" value="UniProtKB-UniRule"/>
</dbReference>
<dbReference type="GO" id="GO:0006308">
    <property type="term" value="P:DNA catabolic process"/>
    <property type="evidence" value="ECO:0007669"/>
    <property type="project" value="UniProtKB-UniRule"/>
</dbReference>
<dbReference type="Gene3D" id="1.10.287.1040">
    <property type="entry name" value="Exonuclease VII, small subunit"/>
    <property type="match status" value="1"/>
</dbReference>
<dbReference type="HAMAP" id="MF_00337">
    <property type="entry name" value="Exonuc_7_S"/>
    <property type="match status" value="1"/>
</dbReference>
<dbReference type="InterPro" id="IPR003761">
    <property type="entry name" value="Exonuc_VII_S"/>
</dbReference>
<dbReference type="InterPro" id="IPR037004">
    <property type="entry name" value="Exonuc_VII_ssu_sf"/>
</dbReference>
<dbReference type="NCBIfam" id="NF002140">
    <property type="entry name" value="PRK00977.1-4"/>
    <property type="match status" value="1"/>
</dbReference>
<dbReference type="NCBIfam" id="TIGR01280">
    <property type="entry name" value="xseB"/>
    <property type="match status" value="1"/>
</dbReference>
<dbReference type="PANTHER" id="PTHR34137">
    <property type="entry name" value="EXODEOXYRIBONUCLEASE 7 SMALL SUBUNIT"/>
    <property type="match status" value="1"/>
</dbReference>
<dbReference type="PANTHER" id="PTHR34137:SF1">
    <property type="entry name" value="EXODEOXYRIBONUCLEASE 7 SMALL SUBUNIT"/>
    <property type="match status" value="1"/>
</dbReference>
<dbReference type="Pfam" id="PF02609">
    <property type="entry name" value="Exonuc_VII_S"/>
    <property type="match status" value="1"/>
</dbReference>
<dbReference type="PIRSF" id="PIRSF006488">
    <property type="entry name" value="Exonuc_VII_S"/>
    <property type="match status" value="1"/>
</dbReference>
<dbReference type="SUPFAM" id="SSF116842">
    <property type="entry name" value="XseB-like"/>
    <property type="match status" value="1"/>
</dbReference>
<gene>
    <name evidence="1" type="primary">xseB</name>
    <name type="ordered locus">NT01CX_1981</name>
</gene>
<organism>
    <name type="scientific">Clostridium novyi (strain NT)</name>
    <dbReference type="NCBI Taxonomy" id="386415"/>
    <lineage>
        <taxon>Bacteria</taxon>
        <taxon>Bacillati</taxon>
        <taxon>Bacillota</taxon>
        <taxon>Clostridia</taxon>
        <taxon>Eubacteriales</taxon>
        <taxon>Clostridiaceae</taxon>
        <taxon>Clostridium</taxon>
    </lineage>
</organism>
<reference key="1">
    <citation type="journal article" date="2006" name="Nat. Biotechnol.">
        <title>The genome and transcriptomes of the anti-tumor agent Clostridium novyi-NT.</title>
        <authorList>
            <person name="Bettegowda C."/>
            <person name="Huang X."/>
            <person name="Lin J."/>
            <person name="Cheong I."/>
            <person name="Kohli M."/>
            <person name="Szabo S.A."/>
            <person name="Zhang X."/>
            <person name="Diaz L.A. Jr."/>
            <person name="Velculescu V.E."/>
            <person name="Parmigiani G."/>
            <person name="Kinzler K.W."/>
            <person name="Vogelstein B."/>
            <person name="Zhou S."/>
        </authorList>
    </citation>
    <scope>NUCLEOTIDE SEQUENCE [LARGE SCALE GENOMIC DNA]</scope>
    <source>
        <strain>NT</strain>
    </source>
</reference>
<accession>A0Q0A2</accession>
<keyword id="KW-0963">Cytoplasm</keyword>
<keyword id="KW-0269">Exonuclease</keyword>
<keyword id="KW-0378">Hydrolase</keyword>
<keyword id="KW-0540">Nuclease</keyword>
<keyword id="KW-1185">Reference proteome</keyword>
<sequence length="73" mass="8493">MARKKESYESLMIKLQDIIEEMESEEISLEGSMKNYEEGIKLCNKMYKVLNEAEAKIKILDGNEEKEFVGNDN</sequence>
<comment type="function">
    <text evidence="1">Bidirectionally degrades single-stranded DNA into large acid-insoluble oligonucleotides, which are then degraded further into small acid-soluble oligonucleotides.</text>
</comment>
<comment type="catalytic activity">
    <reaction evidence="1">
        <text>Exonucleolytic cleavage in either 5'- to 3'- or 3'- to 5'-direction to yield nucleoside 5'-phosphates.</text>
        <dbReference type="EC" id="3.1.11.6"/>
    </reaction>
</comment>
<comment type="subunit">
    <text evidence="1">Heterooligomer composed of large and small subunits.</text>
</comment>
<comment type="subcellular location">
    <subcellularLocation>
        <location evidence="1">Cytoplasm</location>
    </subcellularLocation>
</comment>
<comment type="similarity">
    <text evidence="1">Belongs to the XseB family.</text>
</comment>
<evidence type="ECO:0000255" key="1">
    <source>
        <dbReference type="HAMAP-Rule" id="MF_00337"/>
    </source>
</evidence>
<feature type="chain" id="PRO_0000303701" description="Exodeoxyribonuclease 7 small subunit">
    <location>
        <begin position="1"/>
        <end position="73"/>
    </location>
</feature>
<name>EX7S_CLONN</name>
<protein>
    <recommendedName>
        <fullName evidence="1">Exodeoxyribonuclease 7 small subunit</fullName>
        <ecNumber evidence="1">3.1.11.6</ecNumber>
    </recommendedName>
    <alternativeName>
        <fullName evidence="1">Exodeoxyribonuclease VII small subunit</fullName>
        <shortName evidence="1">Exonuclease VII small subunit</shortName>
    </alternativeName>
</protein>